<name>NAIF1_HUMAN</name>
<accession>Q69YI7</accession>
<accession>B3KV81</accession>
<accession>Q8WU12</accession>
<organism>
    <name type="scientific">Homo sapiens</name>
    <name type="common">Human</name>
    <dbReference type="NCBI Taxonomy" id="9606"/>
    <lineage>
        <taxon>Eukaryota</taxon>
        <taxon>Metazoa</taxon>
        <taxon>Chordata</taxon>
        <taxon>Craniata</taxon>
        <taxon>Vertebrata</taxon>
        <taxon>Euteleostomi</taxon>
        <taxon>Mammalia</taxon>
        <taxon>Eutheria</taxon>
        <taxon>Euarchontoglires</taxon>
        <taxon>Primates</taxon>
        <taxon>Haplorrhini</taxon>
        <taxon>Catarrhini</taxon>
        <taxon>Hominidae</taxon>
        <taxon>Homo</taxon>
    </lineage>
</organism>
<feature type="chain" id="PRO_0000089724" description="Nuclear apoptosis-inducing factor 1">
    <location>
        <begin position="1"/>
        <end position="327"/>
    </location>
</feature>
<feature type="region of interest" description="Required for nuclear localization and apoptosis-inducing activity">
    <location>
        <begin position="1"/>
        <end position="70"/>
    </location>
</feature>
<feature type="region of interest" description="Disordered" evidence="1">
    <location>
        <begin position="87"/>
        <end position="118"/>
    </location>
</feature>
<feature type="region of interest" description="Disordered" evidence="1">
    <location>
        <begin position="303"/>
        <end position="327"/>
    </location>
</feature>
<feature type="compositionally biased region" description="Low complexity" evidence="1">
    <location>
        <begin position="87"/>
        <end position="98"/>
    </location>
</feature>
<feature type="compositionally biased region" description="Gly residues" evidence="1">
    <location>
        <begin position="104"/>
        <end position="118"/>
    </location>
</feature>
<feature type="compositionally biased region" description="Polar residues" evidence="1">
    <location>
        <begin position="316"/>
        <end position="327"/>
    </location>
</feature>
<feature type="splice variant" id="VSP_014447" description="In isoform 2." evidence="4">
    <original>IP</original>
    <variation>SE</variation>
    <location>
        <begin position="171"/>
        <end position="172"/>
    </location>
</feature>
<feature type="splice variant" id="VSP_014448" description="In isoform 2." evidence="4">
    <location>
        <begin position="173"/>
        <end position="327"/>
    </location>
</feature>
<proteinExistence type="evidence at protein level"/>
<sequence>MAVPAKKRKMNFSEREVEIIVEELELKKHLLVNHFNAGVPLAAKSAAWHGILRRVNAVATCRRELPEVKKKWSDLKTEVRRKVAQVRAAVEGGEAPGPTEEDGAGGPGTGGGSGGGGPAVAPVLLTPMQQRICNLLGEATIISLPSTTEIHPVALGPSATAAAATVTLTQIPTETTYHTLEEGVVEYCTAEAPPPLPPETPVDMMAQHADTSVKPQALKSRIALNSAKLIQEQRVTNLHVKEIAQHLEQQNDLLQMIRRSQEVQACAQERQAQAMEGTQAALSVLIQVLRPMIKDFRRYLQSNTANPAPASDPGQVAQNGQPDSIIQ</sequence>
<keyword id="KW-0025">Alternative splicing</keyword>
<keyword id="KW-0053">Apoptosis</keyword>
<keyword id="KW-0539">Nucleus</keyword>
<keyword id="KW-1267">Proteomics identification</keyword>
<keyword id="KW-1185">Reference proteome</keyword>
<gene>
    <name type="primary">NAIF1</name>
    <name type="synonym">C9orf90</name>
</gene>
<evidence type="ECO:0000256" key="1">
    <source>
        <dbReference type="SAM" id="MobiDB-lite"/>
    </source>
</evidence>
<evidence type="ECO:0000269" key="2">
    <source>
    </source>
</evidence>
<evidence type="ECO:0000269" key="3">
    <source>
    </source>
</evidence>
<evidence type="ECO:0000303" key="4">
    <source>
    </source>
</evidence>
<evidence type="ECO:0000305" key="5"/>
<comment type="function">
    <text evidence="2">Induces apoptosis.</text>
</comment>
<comment type="subunit">
    <text evidence="3">Interacts with HARBI1.</text>
</comment>
<comment type="interaction">
    <interactant intactId="EBI-10249231">
        <id>Q69YI7</id>
    </interactant>
    <interactant intactId="EBI-748961">
        <id>O95273</id>
        <label>CCNDBP1</label>
    </interactant>
    <organismsDiffer>false</organismsDiffer>
    <experiments>3</experiments>
</comment>
<comment type="interaction">
    <interactant intactId="EBI-10249231">
        <id>Q69YI7</id>
    </interactant>
    <interactant intactId="EBI-21891462">
        <id>Q96MB7</id>
        <label>HARBI1</label>
    </interactant>
    <organismsDiffer>false</organismsDiffer>
    <experiments>2</experiments>
</comment>
<comment type="interaction">
    <interactant intactId="EBI-10249231">
        <id>Q69YI7</id>
    </interactant>
    <interactant intactId="EBI-9087806">
        <id>O95416</id>
        <label>SOX14</label>
    </interactant>
    <organismsDiffer>false</organismsDiffer>
    <experiments>4</experiments>
</comment>
<comment type="interaction">
    <interactant intactId="EBI-10249231">
        <id>Q69YI7</id>
    </interactant>
    <interactant intactId="EBI-706637">
        <id>Q15554</id>
        <label>TERF2</label>
    </interactant>
    <organismsDiffer>false</organismsDiffer>
    <experiments>2</experiments>
</comment>
<comment type="interaction">
    <interactant intactId="EBI-18040878">
        <id>Q69YI7-2</id>
    </interactant>
    <interactant intactId="EBI-21535880">
        <id>Q92870-2</id>
        <label>APBB2</label>
    </interactant>
    <organismsDiffer>false</organismsDiffer>
    <experiments>3</experiments>
</comment>
<comment type="interaction">
    <interactant intactId="EBI-18040878">
        <id>Q69YI7-2</id>
    </interactant>
    <interactant intactId="EBI-10240813">
        <id>Q3KNR5</id>
        <label>PAX4</label>
    </interactant>
    <organismsDiffer>false</organismsDiffer>
    <experiments>3</experiments>
</comment>
<comment type="subcellular location">
    <subcellularLocation>
        <location evidence="2 3">Nucleus</location>
    </subcellularLocation>
</comment>
<comment type="alternative products">
    <event type="alternative splicing"/>
    <isoform>
        <id>Q69YI7-1</id>
        <name>1</name>
        <sequence type="displayed"/>
    </isoform>
    <isoform>
        <id>Q69YI7-2</id>
        <name>2</name>
        <sequence type="described" ref="VSP_014447 VSP_014448"/>
    </isoform>
</comment>
<comment type="tissue specificity">
    <text evidence="2">Widely expressed.</text>
</comment>
<comment type="similarity">
    <text evidence="5">Belongs to the NAIF1 family.</text>
</comment>
<reference key="1">
    <citation type="journal article" date="2004" name="Nat. Genet.">
        <title>Complete sequencing and characterization of 21,243 full-length human cDNAs.</title>
        <authorList>
            <person name="Ota T."/>
            <person name="Suzuki Y."/>
            <person name="Nishikawa T."/>
            <person name="Otsuki T."/>
            <person name="Sugiyama T."/>
            <person name="Irie R."/>
            <person name="Wakamatsu A."/>
            <person name="Hayashi K."/>
            <person name="Sato H."/>
            <person name="Nagai K."/>
            <person name="Kimura K."/>
            <person name="Makita H."/>
            <person name="Sekine M."/>
            <person name="Obayashi M."/>
            <person name="Nishi T."/>
            <person name="Shibahara T."/>
            <person name="Tanaka T."/>
            <person name="Ishii S."/>
            <person name="Yamamoto J."/>
            <person name="Saito K."/>
            <person name="Kawai Y."/>
            <person name="Isono Y."/>
            <person name="Nakamura Y."/>
            <person name="Nagahari K."/>
            <person name="Murakami K."/>
            <person name="Yasuda T."/>
            <person name="Iwayanagi T."/>
            <person name="Wagatsuma M."/>
            <person name="Shiratori A."/>
            <person name="Sudo H."/>
            <person name="Hosoiri T."/>
            <person name="Kaku Y."/>
            <person name="Kodaira H."/>
            <person name="Kondo H."/>
            <person name="Sugawara M."/>
            <person name="Takahashi M."/>
            <person name="Kanda K."/>
            <person name="Yokoi T."/>
            <person name="Furuya T."/>
            <person name="Kikkawa E."/>
            <person name="Omura Y."/>
            <person name="Abe K."/>
            <person name="Kamihara K."/>
            <person name="Katsuta N."/>
            <person name="Sato K."/>
            <person name="Tanikawa M."/>
            <person name="Yamazaki M."/>
            <person name="Ninomiya K."/>
            <person name="Ishibashi T."/>
            <person name="Yamashita H."/>
            <person name="Murakawa K."/>
            <person name="Fujimori K."/>
            <person name="Tanai H."/>
            <person name="Kimata M."/>
            <person name="Watanabe M."/>
            <person name="Hiraoka S."/>
            <person name="Chiba Y."/>
            <person name="Ishida S."/>
            <person name="Ono Y."/>
            <person name="Takiguchi S."/>
            <person name="Watanabe S."/>
            <person name="Yosida M."/>
            <person name="Hotuta T."/>
            <person name="Kusano J."/>
            <person name="Kanehori K."/>
            <person name="Takahashi-Fujii A."/>
            <person name="Hara H."/>
            <person name="Tanase T.-O."/>
            <person name="Nomura Y."/>
            <person name="Togiya S."/>
            <person name="Komai F."/>
            <person name="Hara R."/>
            <person name="Takeuchi K."/>
            <person name="Arita M."/>
            <person name="Imose N."/>
            <person name="Musashino K."/>
            <person name="Yuuki H."/>
            <person name="Oshima A."/>
            <person name="Sasaki N."/>
            <person name="Aotsuka S."/>
            <person name="Yoshikawa Y."/>
            <person name="Matsunawa H."/>
            <person name="Ichihara T."/>
            <person name="Shiohata N."/>
            <person name="Sano S."/>
            <person name="Moriya S."/>
            <person name="Momiyama H."/>
            <person name="Satoh N."/>
            <person name="Takami S."/>
            <person name="Terashima Y."/>
            <person name="Suzuki O."/>
            <person name="Nakagawa S."/>
            <person name="Senoh A."/>
            <person name="Mizoguchi H."/>
            <person name="Goto Y."/>
            <person name="Shimizu F."/>
            <person name="Wakebe H."/>
            <person name="Hishigaki H."/>
            <person name="Watanabe T."/>
            <person name="Sugiyama A."/>
            <person name="Takemoto M."/>
            <person name="Kawakami B."/>
            <person name="Yamazaki M."/>
            <person name="Watanabe K."/>
            <person name="Kumagai A."/>
            <person name="Itakura S."/>
            <person name="Fukuzumi Y."/>
            <person name="Fujimori Y."/>
            <person name="Komiyama M."/>
            <person name="Tashiro H."/>
            <person name="Tanigami A."/>
            <person name="Fujiwara T."/>
            <person name="Ono T."/>
            <person name="Yamada K."/>
            <person name="Fujii Y."/>
            <person name="Ozaki K."/>
            <person name="Hirao M."/>
            <person name="Ohmori Y."/>
            <person name="Kawabata A."/>
            <person name="Hikiji T."/>
            <person name="Kobatake N."/>
            <person name="Inagaki H."/>
            <person name="Ikema Y."/>
            <person name="Okamoto S."/>
            <person name="Okitani R."/>
            <person name="Kawakami T."/>
            <person name="Noguchi S."/>
            <person name="Itoh T."/>
            <person name="Shigeta K."/>
            <person name="Senba T."/>
            <person name="Matsumura K."/>
            <person name="Nakajima Y."/>
            <person name="Mizuno T."/>
            <person name="Morinaga M."/>
            <person name="Sasaki M."/>
            <person name="Togashi T."/>
            <person name="Oyama M."/>
            <person name="Hata H."/>
            <person name="Watanabe M."/>
            <person name="Komatsu T."/>
            <person name="Mizushima-Sugano J."/>
            <person name="Satoh T."/>
            <person name="Shirai Y."/>
            <person name="Takahashi Y."/>
            <person name="Nakagawa K."/>
            <person name="Okumura K."/>
            <person name="Nagase T."/>
            <person name="Nomura N."/>
            <person name="Kikuchi H."/>
            <person name="Masuho Y."/>
            <person name="Yamashita R."/>
            <person name="Nakai K."/>
            <person name="Yada T."/>
            <person name="Nakamura Y."/>
            <person name="Ohara O."/>
            <person name="Isogai T."/>
            <person name="Sugano S."/>
        </authorList>
    </citation>
    <scope>NUCLEOTIDE SEQUENCE [LARGE SCALE MRNA] (ISOFORM 1)</scope>
    <source>
        <tissue>Liver</tissue>
    </source>
</reference>
<reference key="2">
    <citation type="journal article" date="2007" name="BMC Genomics">
        <title>The full-ORF clone resource of the German cDNA consortium.</title>
        <authorList>
            <person name="Bechtel S."/>
            <person name="Rosenfelder H."/>
            <person name="Duda A."/>
            <person name="Schmidt C.P."/>
            <person name="Ernst U."/>
            <person name="Wellenreuther R."/>
            <person name="Mehrle A."/>
            <person name="Schuster C."/>
            <person name="Bahr A."/>
            <person name="Bloecker H."/>
            <person name="Heubner D."/>
            <person name="Hoerlein A."/>
            <person name="Michel G."/>
            <person name="Wedler H."/>
            <person name="Koehrer K."/>
            <person name="Ottenwaelder B."/>
            <person name="Poustka A."/>
            <person name="Wiemann S."/>
            <person name="Schupp I."/>
        </authorList>
    </citation>
    <scope>NUCLEOTIDE SEQUENCE [LARGE SCALE MRNA] (ISOFORM 1)</scope>
    <source>
        <tissue>Melanoma</tissue>
    </source>
</reference>
<reference key="3">
    <citation type="journal article" date="2004" name="Nature">
        <title>DNA sequence and analysis of human chromosome 9.</title>
        <authorList>
            <person name="Humphray S.J."/>
            <person name="Oliver K."/>
            <person name="Hunt A.R."/>
            <person name="Plumb R.W."/>
            <person name="Loveland J.E."/>
            <person name="Howe K.L."/>
            <person name="Andrews T.D."/>
            <person name="Searle S."/>
            <person name="Hunt S.E."/>
            <person name="Scott C.E."/>
            <person name="Jones M.C."/>
            <person name="Ainscough R."/>
            <person name="Almeida J.P."/>
            <person name="Ambrose K.D."/>
            <person name="Ashwell R.I.S."/>
            <person name="Babbage A.K."/>
            <person name="Babbage S."/>
            <person name="Bagguley C.L."/>
            <person name="Bailey J."/>
            <person name="Banerjee R."/>
            <person name="Barker D.J."/>
            <person name="Barlow K.F."/>
            <person name="Bates K."/>
            <person name="Beasley H."/>
            <person name="Beasley O."/>
            <person name="Bird C.P."/>
            <person name="Bray-Allen S."/>
            <person name="Brown A.J."/>
            <person name="Brown J.Y."/>
            <person name="Burford D."/>
            <person name="Burrill W."/>
            <person name="Burton J."/>
            <person name="Carder C."/>
            <person name="Carter N.P."/>
            <person name="Chapman J.C."/>
            <person name="Chen Y."/>
            <person name="Clarke G."/>
            <person name="Clark S.Y."/>
            <person name="Clee C.M."/>
            <person name="Clegg S."/>
            <person name="Collier R.E."/>
            <person name="Corby N."/>
            <person name="Crosier M."/>
            <person name="Cummings A.T."/>
            <person name="Davies J."/>
            <person name="Dhami P."/>
            <person name="Dunn M."/>
            <person name="Dutta I."/>
            <person name="Dyer L.W."/>
            <person name="Earthrowl M.E."/>
            <person name="Faulkner L."/>
            <person name="Fleming C.J."/>
            <person name="Frankish A."/>
            <person name="Frankland J.A."/>
            <person name="French L."/>
            <person name="Fricker D.G."/>
            <person name="Garner P."/>
            <person name="Garnett J."/>
            <person name="Ghori J."/>
            <person name="Gilbert J.G.R."/>
            <person name="Glison C."/>
            <person name="Grafham D.V."/>
            <person name="Gribble S."/>
            <person name="Griffiths C."/>
            <person name="Griffiths-Jones S."/>
            <person name="Grocock R."/>
            <person name="Guy J."/>
            <person name="Hall R.E."/>
            <person name="Hammond S."/>
            <person name="Harley J.L."/>
            <person name="Harrison E.S.I."/>
            <person name="Hart E.A."/>
            <person name="Heath P.D."/>
            <person name="Henderson C.D."/>
            <person name="Hopkins B.L."/>
            <person name="Howard P.J."/>
            <person name="Howden P.J."/>
            <person name="Huckle E."/>
            <person name="Johnson C."/>
            <person name="Johnson D."/>
            <person name="Joy A.A."/>
            <person name="Kay M."/>
            <person name="Keenan S."/>
            <person name="Kershaw J.K."/>
            <person name="Kimberley A.M."/>
            <person name="King A."/>
            <person name="Knights A."/>
            <person name="Laird G.K."/>
            <person name="Langford C."/>
            <person name="Lawlor S."/>
            <person name="Leongamornlert D.A."/>
            <person name="Leversha M."/>
            <person name="Lloyd C."/>
            <person name="Lloyd D.M."/>
            <person name="Lovell J."/>
            <person name="Martin S."/>
            <person name="Mashreghi-Mohammadi M."/>
            <person name="Matthews L."/>
            <person name="McLaren S."/>
            <person name="McLay K.E."/>
            <person name="McMurray A."/>
            <person name="Milne S."/>
            <person name="Nickerson T."/>
            <person name="Nisbett J."/>
            <person name="Nordsiek G."/>
            <person name="Pearce A.V."/>
            <person name="Peck A.I."/>
            <person name="Porter K.M."/>
            <person name="Pandian R."/>
            <person name="Pelan S."/>
            <person name="Phillimore B."/>
            <person name="Povey S."/>
            <person name="Ramsey Y."/>
            <person name="Rand V."/>
            <person name="Scharfe M."/>
            <person name="Sehra H.K."/>
            <person name="Shownkeen R."/>
            <person name="Sims S.K."/>
            <person name="Skuce C.D."/>
            <person name="Smith M."/>
            <person name="Steward C.A."/>
            <person name="Swarbreck D."/>
            <person name="Sycamore N."/>
            <person name="Tester J."/>
            <person name="Thorpe A."/>
            <person name="Tracey A."/>
            <person name="Tromans A."/>
            <person name="Thomas D.W."/>
            <person name="Wall M."/>
            <person name="Wallis J.M."/>
            <person name="West A.P."/>
            <person name="Whitehead S.L."/>
            <person name="Willey D.L."/>
            <person name="Williams S.A."/>
            <person name="Wilming L."/>
            <person name="Wray P.W."/>
            <person name="Young L."/>
            <person name="Ashurst J.L."/>
            <person name="Coulson A."/>
            <person name="Blocker H."/>
            <person name="Durbin R.M."/>
            <person name="Sulston J.E."/>
            <person name="Hubbard T."/>
            <person name="Jackson M.J."/>
            <person name="Bentley D.R."/>
            <person name="Beck S."/>
            <person name="Rogers J."/>
            <person name="Dunham I."/>
        </authorList>
    </citation>
    <scope>NUCLEOTIDE SEQUENCE [LARGE SCALE GENOMIC DNA]</scope>
</reference>
<reference key="4">
    <citation type="submission" date="2005-07" db="EMBL/GenBank/DDBJ databases">
        <authorList>
            <person name="Mural R.J."/>
            <person name="Istrail S."/>
            <person name="Sutton G.G."/>
            <person name="Florea L."/>
            <person name="Halpern A.L."/>
            <person name="Mobarry C.M."/>
            <person name="Lippert R."/>
            <person name="Walenz B."/>
            <person name="Shatkay H."/>
            <person name="Dew I."/>
            <person name="Miller J.R."/>
            <person name="Flanigan M.J."/>
            <person name="Edwards N.J."/>
            <person name="Bolanos R."/>
            <person name="Fasulo D."/>
            <person name="Halldorsson B.V."/>
            <person name="Hannenhalli S."/>
            <person name="Turner R."/>
            <person name="Yooseph S."/>
            <person name="Lu F."/>
            <person name="Nusskern D.R."/>
            <person name="Shue B.C."/>
            <person name="Zheng X.H."/>
            <person name="Zhong F."/>
            <person name="Delcher A.L."/>
            <person name="Huson D.H."/>
            <person name="Kravitz S.A."/>
            <person name="Mouchard L."/>
            <person name="Reinert K."/>
            <person name="Remington K.A."/>
            <person name="Clark A.G."/>
            <person name="Waterman M.S."/>
            <person name="Eichler E.E."/>
            <person name="Adams M.D."/>
            <person name="Hunkapiller M.W."/>
            <person name="Myers E.W."/>
            <person name="Venter J.C."/>
        </authorList>
    </citation>
    <scope>NUCLEOTIDE SEQUENCE [LARGE SCALE GENOMIC DNA]</scope>
</reference>
<reference key="5">
    <citation type="journal article" date="2004" name="Genome Res.">
        <title>The status, quality, and expansion of the NIH full-length cDNA project: the Mammalian Gene Collection (MGC).</title>
        <authorList>
            <consortium name="The MGC Project Team"/>
        </authorList>
    </citation>
    <scope>NUCLEOTIDE SEQUENCE [LARGE SCALE MRNA] (ISOFORM 2)</scope>
    <source>
        <tissue>Placenta</tissue>
    </source>
</reference>
<reference key="6">
    <citation type="journal article" date="2006" name="Int. J. Biochem. Cell Biol.">
        <title>Overexpression of the novel human gene, nuclear apoptosis-inducing factor 1, induces apoptosis.</title>
        <authorList>
            <person name="Lv B."/>
            <person name="Shi T."/>
            <person name="Wang X."/>
            <person name="Song Q."/>
            <person name="Zhang Y."/>
            <person name="Shen Y."/>
            <person name="Ma D."/>
            <person name="Lou Y."/>
        </authorList>
    </citation>
    <scope>FUNCTION</scope>
    <scope>SUBCELLULAR LOCATION</scope>
    <scope>TISSUE SPECIFICITY</scope>
</reference>
<reference key="7">
    <citation type="journal article" date="2008" name="Proc. Natl. Acad. Sci. U.S.A.">
        <title>Transposition of a reconstructed Harbinger element in human cells and functional homology with two transposon-derived cellular genes.</title>
        <authorList>
            <person name="Sinzelle L."/>
            <person name="Kapitonov V.V."/>
            <person name="Grzela D.P."/>
            <person name="Jursch T."/>
            <person name="Jurka J."/>
            <person name="Izsvak Z."/>
            <person name="Ivics Z."/>
        </authorList>
    </citation>
    <scope>INTERACTION WITH HARBI1</scope>
    <scope>SUBCELLULAR LOCATION</scope>
</reference>
<dbReference type="EMBL" id="AK122729">
    <property type="protein sequence ID" value="BAG53693.1"/>
    <property type="molecule type" value="mRNA"/>
</dbReference>
<dbReference type="EMBL" id="AL833392">
    <property type="protein sequence ID" value="CAH10588.1"/>
    <property type="molecule type" value="mRNA"/>
</dbReference>
<dbReference type="EMBL" id="AL360268">
    <property type="status" value="NOT_ANNOTATED_CDS"/>
    <property type="molecule type" value="Genomic_DNA"/>
</dbReference>
<dbReference type="EMBL" id="CH471090">
    <property type="protein sequence ID" value="EAW87735.1"/>
    <property type="molecule type" value="Genomic_DNA"/>
</dbReference>
<dbReference type="EMBL" id="BC021580">
    <property type="protein sequence ID" value="AAH21580.1"/>
    <property type="molecule type" value="mRNA"/>
</dbReference>
<dbReference type="CCDS" id="CCDS6889.1">
    <molecule id="Q69YI7-1"/>
</dbReference>
<dbReference type="RefSeq" id="NP_931045.1">
    <molecule id="Q69YI7-1"/>
    <property type="nucleotide sequence ID" value="NM_197956.4"/>
</dbReference>
<dbReference type="RefSeq" id="XP_047278896.1">
    <molecule id="Q69YI7-1"/>
    <property type="nucleotide sequence ID" value="XM_047422940.1"/>
</dbReference>
<dbReference type="RefSeq" id="XP_054218273.1">
    <molecule id="Q69YI7-1"/>
    <property type="nucleotide sequence ID" value="XM_054362298.1"/>
</dbReference>
<dbReference type="BioGRID" id="128460">
    <property type="interactions" value="14"/>
</dbReference>
<dbReference type="FunCoup" id="Q69YI7">
    <property type="interactions" value="2851"/>
</dbReference>
<dbReference type="IntAct" id="Q69YI7">
    <property type="interactions" value="8"/>
</dbReference>
<dbReference type="STRING" id="9606.ENSP00000362170"/>
<dbReference type="GlyGen" id="Q69YI7">
    <property type="glycosylation" value="1 site"/>
</dbReference>
<dbReference type="iPTMnet" id="Q69YI7"/>
<dbReference type="PhosphoSitePlus" id="Q69YI7"/>
<dbReference type="BioMuta" id="NAIF1"/>
<dbReference type="DMDM" id="68565165"/>
<dbReference type="jPOST" id="Q69YI7"/>
<dbReference type="MassIVE" id="Q69YI7"/>
<dbReference type="PaxDb" id="9606-ENSP00000362170"/>
<dbReference type="PeptideAtlas" id="Q69YI7"/>
<dbReference type="ProteomicsDB" id="66156">
    <molecule id="Q69YI7-1"/>
</dbReference>
<dbReference type="ProteomicsDB" id="66157">
    <molecule id="Q69YI7-2"/>
</dbReference>
<dbReference type="Antibodypedia" id="30951">
    <property type="antibodies" value="106 antibodies from 18 providers"/>
</dbReference>
<dbReference type="DNASU" id="203245"/>
<dbReference type="Ensembl" id="ENST00000373078.5">
    <molecule id="Q69YI7-1"/>
    <property type="protein sequence ID" value="ENSP00000362170.4"/>
    <property type="gene ID" value="ENSG00000171169.9"/>
</dbReference>
<dbReference type="GeneID" id="203245"/>
<dbReference type="KEGG" id="hsa:203245"/>
<dbReference type="MANE-Select" id="ENST00000373078.5">
    <property type="protein sequence ID" value="ENSP00000362170.4"/>
    <property type="RefSeq nucleotide sequence ID" value="NM_197956.4"/>
    <property type="RefSeq protein sequence ID" value="NP_931045.1"/>
</dbReference>
<dbReference type="UCSC" id="uc004bta.4">
    <molecule id="Q69YI7-1"/>
    <property type="organism name" value="human"/>
</dbReference>
<dbReference type="AGR" id="HGNC:25446"/>
<dbReference type="CTD" id="203245"/>
<dbReference type="DisGeNET" id="203245"/>
<dbReference type="GeneCards" id="NAIF1"/>
<dbReference type="HGNC" id="HGNC:25446">
    <property type="gene designation" value="NAIF1"/>
</dbReference>
<dbReference type="HPA" id="ENSG00000171169">
    <property type="expression patterns" value="Low tissue specificity"/>
</dbReference>
<dbReference type="MIM" id="610673">
    <property type="type" value="gene"/>
</dbReference>
<dbReference type="neXtProt" id="NX_Q69YI7"/>
<dbReference type="OpenTargets" id="ENSG00000171169"/>
<dbReference type="PharmGKB" id="PA162396796"/>
<dbReference type="VEuPathDB" id="HostDB:ENSG00000171169"/>
<dbReference type="eggNOG" id="ENOG502QW9U">
    <property type="taxonomic scope" value="Eukaryota"/>
</dbReference>
<dbReference type="GeneTree" id="ENSGT00450000040324"/>
<dbReference type="HOGENOM" id="CLU_078961_0_0_1"/>
<dbReference type="InParanoid" id="Q69YI7"/>
<dbReference type="OMA" id="QQDGMIQ"/>
<dbReference type="OrthoDB" id="9039237at2759"/>
<dbReference type="PAN-GO" id="Q69YI7">
    <property type="GO annotations" value="1 GO annotation based on evolutionary models"/>
</dbReference>
<dbReference type="PhylomeDB" id="Q69YI7"/>
<dbReference type="TreeFam" id="TF332812"/>
<dbReference type="PathwayCommons" id="Q69YI7"/>
<dbReference type="SignaLink" id="Q69YI7"/>
<dbReference type="BioGRID-ORCS" id="203245">
    <property type="hits" value="19 hits in 1158 CRISPR screens"/>
</dbReference>
<dbReference type="GenomeRNAi" id="203245"/>
<dbReference type="Pharos" id="Q69YI7">
    <property type="development level" value="Tbio"/>
</dbReference>
<dbReference type="PRO" id="PR:Q69YI7"/>
<dbReference type="Proteomes" id="UP000005640">
    <property type="component" value="Chromosome 9"/>
</dbReference>
<dbReference type="RNAct" id="Q69YI7">
    <property type="molecule type" value="protein"/>
</dbReference>
<dbReference type="Bgee" id="ENSG00000171169">
    <property type="expression patterns" value="Expressed in granulocyte and 103 other cell types or tissues"/>
</dbReference>
<dbReference type="ExpressionAtlas" id="Q69YI7">
    <property type="expression patterns" value="baseline and differential"/>
</dbReference>
<dbReference type="GO" id="GO:0005829">
    <property type="term" value="C:cytosol"/>
    <property type="evidence" value="ECO:0000314"/>
    <property type="project" value="HPA"/>
</dbReference>
<dbReference type="GO" id="GO:0005739">
    <property type="term" value="C:mitochondrion"/>
    <property type="evidence" value="ECO:0007669"/>
    <property type="project" value="GOC"/>
</dbReference>
<dbReference type="GO" id="GO:0005654">
    <property type="term" value="C:nucleoplasm"/>
    <property type="evidence" value="ECO:0000314"/>
    <property type="project" value="HPA"/>
</dbReference>
<dbReference type="GO" id="GO:0005634">
    <property type="term" value="C:nucleus"/>
    <property type="evidence" value="ECO:0000314"/>
    <property type="project" value="UniProtKB"/>
</dbReference>
<dbReference type="GO" id="GO:0005886">
    <property type="term" value="C:plasma membrane"/>
    <property type="evidence" value="ECO:0000314"/>
    <property type="project" value="HPA"/>
</dbReference>
<dbReference type="GO" id="GO:0030308">
    <property type="term" value="P:negative regulation of cell growth"/>
    <property type="evidence" value="ECO:0000314"/>
    <property type="project" value="UniProtKB"/>
</dbReference>
<dbReference type="GO" id="GO:1902108">
    <property type="term" value="P:regulation of mitochondrial membrane permeability involved in apoptotic process"/>
    <property type="evidence" value="ECO:0000314"/>
    <property type="project" value="UniProtKB"/>
</dbReference>
<dbReference type="InterPro" id="IPR028002">
    <property type="entry name" value="Myb_DNA-bind_5"/>
</dbReference>
<dbReference type="PANTHER" id="PTHR23098">
    <property type="entry name" value="AGAP001331-PA-RELATED"/>
    <property type="match status" value="1"/>
</dbReference>
<dbReference type="PANTHER" id="PTHR23098:SF7">
    <property type="entry name" value="NUCLEAR APOPTOSIS-INDUCING FACTOR 1"/>
    <property type="match status" value="1"/>
</dbReference>
<dbReference type="Pfam" id="PF13873">
    <property type="entry name" value="Myb_DNA-bind_5"/>
    <property type="match status" value="1"/>
</dbReference>
<protein>
    <recommendedName>
        <fullName>Nuclear apoptosis-inducing factor 1</fullName>
    </recommendedName>
</protein>